<organism>
    <name type="scientific">Rattus norvegicus</name>
    <name type="common">Rat</name>
    <dbReference type="NCBI Taxonomy" id="10116"/>
    <lineage>
        <taxon>Eukaryota</taxon>
        <taxon>Metazoa</taxon>
        <taxon>Chordata</taxon>
        <taxon>Craniata</taxon>
        <taxon>Vertebrata</taxon>
        <taxon>Euteleostomi</taxon>
        <taxon>Mammalia</taxon>
        <taxon>Eutheria</taxon>
        <taxon>Euarchontoglires</taxon>
        <taxon>Glires</taxon>
        <taxon>Rodentia</taxon>
        <taxon>Myomorpha</taxon>
        <taxon>Muroidea</taxon>
        <taxon>Muridae</taxon>
        <taxon>Murinae</taxon>
        <taxon>Rattus</taxon>
    </lineage>
</organism>
<protein>
    <recommendedName>
        <fullName evidence="5">Large ribosomal subunit protein uL4</fullName>
    </recommendedName>
    <alternativeName>
        <fullName>60S ribosomal protein L1</fullName>
    </alternativeName>
    <alternativeName>
        <fullName>60S ribosomal protein L4</fullName>
    </alternativeName>
</protein>
<proteinExistence type="evidence at protein level"/>
<comment type="function">
    <text evidence="1">Component of the large ribosomal subunit. The ribosome is a large ribonucleoprotein complex responsible for the synthesis of proteins in the cell.</text>
</comment>
<comment type="subunit">
    <text evidence="1 4">Component of the large ribosomal subunit. May bind IPO9 with low affinity (By similarity). Interacts with RBM3 (PubMed:15684048).</text>
</comment>
<comment type="subcellular location">
    <subcellularLocation>
        <location evidence="1">Cytoplasm</location>
    </subcellularLocation>
</comment>
<comment type="PTM">
    <text evidence="2">Citrullinated by PADI4.</text>
</comment>
<comment type="similarity">
    <text evidence="5">Belongs to the universal ribosomal protein uL4 family.</text>
</comment>
<evidence type="ECO:0000250" key="1">
    <source>
        <dbReference type="UniProtKB" id="P36578"/>
    </source>
</evidence>
<evidence type="ECO:0000250" key="2">
    <source>
        <dbReference type="UniProtKB" id="Q9D8E6"/>
    </source>
</evidence>
<evidence type="ECO:0000256" key="3">
    <source>
        <dbReference type="SAM" id="MobiDB-lite"/>
    </source>
</evidence>
<evidence type="ECO:0000269" key="4">
    <source>
    </source>
</evidence>
<evidence type="ECO:0000305" key="5"/>
<evidence type="ECO:0007744" key="6">
    <source>
    </source>
</evidence>
<name>RL4_RAT</name>
<gene>
    <name type="primary">Rpl4</name>
    <name type="synonym">Rpl1</name>
</gene>
<sequence>MACARPLISVYSEKGESSGKNVTLPAVFKAPIRPDIVNFVHTNLRKNNRQPYAVSELAGHQTSAESWGTGRAVARIPRVRGGGTHRSGQGAFGNMCRGGRMFAPTKTWRRWHRRVNTTQKRYAICSALAASALPALVMSKGHCVEEVPELPLVVEDKVESYKKTKEAVQLLKKLKAWNDIKKVYASQRMRAGKGKMRNRRRIQRRGPCIIYNEDNGIIKAFRNIPGITLLNVSKLNILKLAPGGHVGRFCIWTESAFRKLDELYGTWRKAASLKSNYNLPMHKMMNTDLSRILKSPEIQRALRAPRKKIHRRVLKKNPLKNLRIMLKLNPYAKTMRRNTILRQARNHKLRVKKLEAAAAALAAKSEKIVPEKGAGDKKPAVGKKGKKPVDAKKLKKPAGKKVVTKKPAEKKPTTEEKKSAA</sequence>
<accession>P50878</accession>
<keyword id="KW-0002">3D-structure</keyword>
<keyword id="KW-0007">Acetylation</keyword>
<keyword id="KW-0164">Citrullination</keyword>
<keyword id="KW-0963">Cytoplasm</keyword>
<keyword id="KW-1017">Isopeptide bond</keyword>
<keyword id="KW-0488">Methylation</keyword>
<keyword id="KW-0597">Phosphoprotein</keyword>
<keyword id="KW-1185">Reference proteome</keyword>
<keyword id="KW-0687">Ribonucleoprotein</keyword>
<keyword id="KW-0689">Ribosomal protein</keyword>
<keyword id="KW-0832">Ubl conjugation</keyword>
<feature type="initiator methionine" description="Removed" evidence="1">
    <location>
        <position position="1"/>
    </location>
</feature>
<feature type="chain" id="PRO_0000129353" description="Large ribosomal subunit protein uL4">
    <location>
        <begin position="2"/>
        <end position="421"/>
    </location>
</feature>
<feature type="region of interest" description="Disordered" evidence="3">
    <location>
        <begin position="365"/>
        <end position="421"/>
    </location>
</feature>
<feature type="compositionally biased region" description="Basic and acidic residues" evidence="3">
    <location>
        <begin position="365"/>
        <end position="379"/>
    </location>
</feature>
<feature type="compositionally biased region" description="Basic residues" evidence="3">
    <location>
        <begin position="393"/>
        <end position="404"/>
    </location>
</feature>
<feature type="compositionally biased region" description="Basic and acidic residues" evidence="3">
    <location>
        <begin position="406"/>
        <end position="421"/>
    </location>
</feature>
<feature type="modified residue" description="N-acetylalanine" evidence="1">
    <location>
        <position position="2"/>
    </location>
</feature>
<feature type="modified residue" description="N6-acetyllysine" evidence="1">
    <location>
        <position position="14"/>
    </location>
</feature>
<feature type="modified residue" description="Omega-N-methylarginine" evidence="2">
    <location>
        <position position="97"/>
    </location>
</feature>
<feature type="modified residue" description="N6-acetyllysine" evidence="1">
    <location>
        <position position="106"/>
    </location>
</feature>
<feature type="modified residue" description="N6-acetyllysine" evidence="2">
    <location>
        <position position="259"/>
    </location>
</feature>
<feature type="modified residue" description="Phosphothreonine" evidence="1">
    <location>
        <position position="266"/>
    </location>
</feature>
<feature type="modified residue" description="Phosphoserine" evidence="6">
    <location>
        <position position="290"/>
    </location>
</feature>
<feature type="modified residue" description="Phosphoserine" evidence="6">
    <location>
        <position position="295"/>
    </location>
</feature>
<feature type="modified residue" description="Citrulline" evidence="2">
    <location>
        <position position="300"/>
    </location>
</feature>
<feature type="modified residue" description="N6-acetyllysine" evidence="1">
    <location>
        <position position="333"/>
    </location>
</feature>
<feature type="modified residue" description="N6-acetyllysine" evidence="2">
    <location>
        <position position="353"/>
    </location>
</feature>
<feature type="modified residue" description="N6-acetyllysine; alternate" evidence="2">
    <location>
        <position position="364"/>
    </location>
</feature>
<feature type="modified residue" description="Phosphoserine" evidence="1">
    <location>
        <position position="365"/>
    </location>
</feature>
<feature type="cross-link" description="Glycyl lysine isopeptide (Lys-Gly) (interchain with G-Cter in SUMO2)" evidence="1">
    <location>
        <position position="239"/>
    </location>
</feature>
<feature type="cross-link" description="Glycyl lysine isopeptide (Lys-Gly) (interchain with G-Cter in SUMO2)" evidence="1">
    <location>
        <position position="327"/>
    </location>
</feature>
<feature type="cross-link" description="Glycyl lysine isopeptide (Lys-Gly) (interchain with G-Cter in SUMO1); alternate" evidence="1">
    <location>
        <position position="364"/>
    </location>
</feature>
<dbReference type="EMBL" id="X82180">
    <property type="protein sequence ID" value="CAA57671.1"/>
    <property type="molecule type" value="mRNA"/>
</dbReference>
<dbReference type="PIR" id="JC4277">
    <property type="entry name" value="JC4277"/>
</dbReference>
<dbReference type="RefSeq" id="NP_071955.1">
    <property type="nucleotide sequence ID" value="NM_022510.1"/>
</dbReference>
<dbReference type="PDB" id="7QGG">
    <property type="method" value="EM"/>
    <property type="resolution" value="2.86 A"/>
    <property type="chains" value="C=1-421"/>
</dbReference>
<dbReference type="PDBsum" id="7QGG"/>
<dbReference type="EMDB" id="EMD-13954"/>
<dbReference type="SMR" id="P50878"/>
<dbReference type="BioGRID" id="249017">
    <property type="interactions" value="7"/>
</dbReference>
<dbReference type="FunCoup" id="P50878">
    <property type="interactions" value="2077"/>
</dbReference>
<dbReference type="IntAct" id="P50878">
    <property type="interactions" value="4"/>
</dbReference>
<dbReference type="MINT" id="P50878"/>
<dbReference type="STRING" id="10116.ENSRNOP00000013462"/>
<dbReference type="iPTMnet" id="P50878"/>
<dbReference type="PhosphoSitePlus" id="P50878"/>
<dbReference type="jPOST" id="P50878"/>
<dbReference type="PaxDb" id="10116-ENSRNOP00000013462"/>
<dbReference type="GeneID" id="64302"/>
<dbReference type="KEGG" id="rno:64302"/>
<dbReference type="UCSC" id="RGD:619824">
    <property type="organism name" value="rat"/>
</dbReference>
<dbReference type="AGR" id="RGD:619824"/>
<dbReference type="CTD" id="6124"/>
<dbReference type="RGD" id="619824">
    <property type="gene designation" value="Rpl4"/>
</dbReference>
<dbReference type="eggNOG" id="KOG1475">
    <property type="taxonomic scope" value="Eukaryota"/>
</dbReference>
<dbReference type="InParanoid" id="P50878"/>
<dbReference type="OrthoDB" id="74014at9989"/>
<dbReference type="PhylomeDB" id="P50878"/>
<dbReference type="Reactome" id="R-RNO-156827">
    <property type="pathway name" value="L13a-mediated translational silencing of Ceruloplasmin expression"/>
</dbReference>
<dbReference type="Reactome" id="R-RNO-1799339">
    <property type="pathway name" value="SRP-dependent cotranslational protein targeting to membrane"/>
</dbReference>
<dbReference type="Reactome" id="R-RNO-6791226">
    <property type="pathway name" value="Major pathway of rRNA processing in the nucleolus and cytosol"/>
</dbReference>
<dbReference type="Reactome" id="R-RNO-72689">
    <property type="pathway name" value="Formation of a pool of free 40S subunits"/>
</dbReference>
<dbReference type="Reactome" id="R-RNO-72706">
    <property type="pathway name" value="GTP hydrolysis and joining of the 60S ribosomal subunit"/>
</dbReference>
<dbReference type="Reactome" id="R-RNO-975956">
    <property type="pathway name" value="Nonsense Mediated Decay (NMD) independent of the Exon Junction Complex (EJC)"/>
</dbReference>
<dbReference type="Reactome" id="R-RNO-975957">
    <property type="pathway name" value="Nonsense Mediated Decay (NMD) enhanced by the Exon Junction Complex (EJC)"/>
</dbReference>
<dbReference type="PRO" id="PR:P50878"/>
<dbReference type="Proteomes" id="UP000002494">
    <property type="component" value="Unplaced"/>
</dbReference>
<dbReference type="GO" id="GO:0031672">
    <property type="term" value="C:A band"/>
    <property type="evidence" value="ECO:0000314"/>
    <property type="project" value="RGD"/>
</dbReference>
<dbReference type="GO" id="GO:0005737">
    <property type="term" value="C:cytoplasm"/>
    <property type="evidence" value="ECO:0000266"/>
    <property type="project" value="RGD"/>
</dbReference>
<dbReference type="GO" id="GO:0022625">
    <property type="term" value="C:cytosolic large ribosomal subunit"/>
    <property type="evidence" value="ECO:0000314"/>
    <property type="project" value="RGD"/>
</dbReference>
<dbReference type="GO" id="GO:0022626">
    <property type="term" value="C:cytosolic ribosome"/>
    <property type="evidence" value="ECO:0000266"/>
    <property type="project" value="RGD"/>
</dbReference>
<dbReference type="GO" id="GO:0015934">
    <property type="term" value="C:large ribosomal subunit"/>
    <property type="evidence" value="ECO:0000314"/>
    <property type="project" value="UniProtKB"/>
</dbReference>
<dbReference type="GO" id="GO:0005634">
    <property type="term" value="C:nucleus"/>
    <property type="evidence" value="ECO:0000266"/>
    <property type="project" value="RGD"/>
</dbReference>
<dbReference type="GO" id="GO:0014069">
    <property type="term" value="C:postsynaptic density"/>
    <property type="evidence" value="ECO:0000314"/>
    <property type="project" value="SynGO"/>
</dbReference>
<dbReference type="GO" id="GO:1990904">
    <property type="term" value="C:ribonucleoprotein complex"/>
    <property type="evidence" value="ECO:0000266"/>
    <property type="project" value="RGD"/>
</dbReference>
<dbReference type="GO" id="GO:0005791">
    <property type="term" value="C:rough endoplasmic reticulum"/>
    <property type="evidence" value="ECO:0000266"/>
    <property type="project" value="RGD"/>
</dbReference>
<dbReference type="GO" id="GO:0008097">
    <property type="term" value="F:5S rRNA binding"/>
    <property type="evidence" value="ECO:0000314"/>
    <property type="project" value="RGD"/>
</dbReference>
<dbReference type="GO" id="GO:0003723">
    <property type="term" value="F:RNA binding"/>
    <property type="evidence" value="ECO:0000318"/>
    <property type="project" value="GO_Central"/>
</dbReference>
<dbReference type="GO" id="GO:0003735">
    <property type="term" value="F:structural constituent of ribosome"/>
    <property type="evidence" value="ECO:0000266"/>
    <property type="project" value="RGD"/>
</dbReference>
<dbReference type="GO" id="GO:0003360">
    <property type="term" value="P:brainstem development"/>
    <property type="evidence" value="ECO:0000270"/>
    <property type="project" value="RGD"/>
</dbReference>
<dbReference type="GO" id="GO:0030154">
    <property type="term" value="P:cell differentiation"/>
    <property type="evidence" value="ECO:0000270"/>
    <property type="project" value="RGD"/>
</dbReference>
<dbReference type="GO" id="GO:0045773">
    <property type="term" value="P:positive regulation of axon extension"/>
    <property type="evidence" value="ECO:0000315"/>
    <property type="project" value="RGD"/>
</dbReference>
<dbReference type="GO" id="GO:0050772">
    <property type="term" value="P:positive regulation of axonogenesis"/>
    <property type="evidence" value="ECO:0000315"/>
    <property type="project" value="RGD"/>
</dbReference>
<dbReference type="GO" id="GO:0006412">
    <property type="term" value="P:translation"/>
    <property type="evidence" value="ECO:0007669"/>
    <property type="project" value="InterPro"/>
</dbReference>
<dbReference type="FunFam" id="3.40.1370.10:FF:000002">
    <property type="entry name" value="60S ribosomal protein L4"/>
    <property type="match status" value="1"/>
</dbReference>
<dbReference type="Gene3D" id="3.40.1370.10">
    <property type="match status" value="1"/>
</dbReference>
<dbReference type="InterPro" id="IPR025755">
    <property type="entry name" value="Ribos_uL4_C_dom"/>
</dbReference>
<dbReference type="InterPro" id="IPR002136">
    <property type="entry name" value="Ribosomal_uL4"/>
</dbReference>
<dbReference type="InterPro" id="IPR023574">
    <property type="entry name" value="Ribosomal_uL4_dom_sf"/>
</dbReference>
<dbReference type="InterPro" id="IPR013000">
    <property type="entry name" value="Ribosomal_uL4_euk/arc_CS"/>
</dbReference>
<dbReference type="InterPro" id="IPR045240">
    <property type="entry name" value="Ribosomal_uL4_euk/arch"/>
</dbReference>
<dbReference type="PANTHER" id="PTHR19431">
    <property type="entry name" value="60S RIBOSOMAL PROTEIN L4"/>
    <property type="match status" value="1"/>
</dbReference>
<dbReference type="Pfam" id="PF14374">
    <property type="entry name" value="Ribos_L4_asso_C"/>
    <property type="match status" value="1"/>
</dbReference>
<dbReference type="Pfam" id="PF00573">
    <property type="entry name" value="Ribosomal_L4"/>
    <property type="match status" value="1"/>
</dbReference>
<dbReference type="SUPFAM" id="SSF52166">
    <property type="entry name" value="Ribosomal protein L4"/>
    <property type="match status" value="1"/>
</dbReference>
<dbReference type="PROSITE" id="PS00939">
    <property type="entry name" value="RIBOSOMAL_L1E"/>
    <property type="match status" value="1"/>
</dbReference>
<reference key="1">
    <citation type="journal article" date="1995" name="Biochem. Biophys. Res. Commun.">
        <title>The primary structures of rat ribosomal proteins L4 and L41.</title>
        <authorList>
            <person name="Chan Y.-L."/>
            <person name="Olvera J."/>
            <person name="Wool I.G."/>
        </authorList>
    </citation>
    <scope>NUCLEOTIDE SEQUENCE [MRNA]</scope>
    <source>
        <strain>Sprague-Dawley</strain>
        <tissue>Liver</tissue>
    </source>
</reference>
<reference key="2">
    <citation type="journal article" date="2005" name="Proc. Natl. Acad. Sci. U.S.A.">
        <title>Cold stress-induced protein Rbm3 binds 60S ribosomal subunits, alters microRNA levels, and enhances global protein synthesis.</title>
        <authorList>
            <person name="Dresios J."/>
            <person name="Aschrafi A."/>
            <person name="Owens G.C."/>
            <person name="Vanderklish P.W."/>
            <person name="Edelman G.M."/>
            <person name="Mauro V.P."/>
        </authorList>
    </citation>
    <scope>INTERACTION WITH RBM3</scope>
</reference>
<reference key="3">
    <citation type="journal article" date="2012" name="Nat. Commun.">
        <title>Quantitative maps of protein phosphorylation sites across 14 different rat organs and tissues.</title>
        <authorList>
            <person name="Lundby A."/>
            <person name="Secher A."/>
            <person name="Lage K."/>
            <person name="Nordsborg N.B."/>
            <person name="Dmytriyev A."/>
            <person name="Lundby C."/>
            <person name="Olsen J.V."/>
        </authorList>
    </citation>
    <scope>PHOSPHORYLATION [LARGE SCALE ANALYSIS] AT SER-290 AND SER-295</scope>
    <scope>IDENTIFICATION BY MASS SPECTROMETRY [LARGE SCALE ANALYSIS]</scope>
</reference>